<gene>
    <name evidence="1" type="primary">miaB</name>
    <name type="ordered locus">XAC2461</name>
</gene>
<comment type="function">
    <text evidence="1">Catalyzes the methylthiolation of N6-(dimethylallyl)adenosine (i(6)A), leading to the formation of 2-methylthio-N6-(dimethylallyl)adenosine (ms(2)i(6)A) at position 37 in tRNAs that read codons beginning with uridine.</text>
</comment>
<comment type="catalytic activity">
    <reaction evidence="1">
        <text>N(6)-dimethylallyladenosine(37) in tRNA + (sulfur carrier)-SH + AH2 + 2 S-adenosyl-L-methionine = 2-methylsulfanyl-N(6)-dimethylallyladenosine(37) in tRNA + (sulfur carrier)-H + 5'-deoxyadenosine + L-methionine + A + S-adenosyl-L-homocysteine + 2 H(+)</text>
        <dbReference type="Rhea" id="RHEA:37067"/>
        <dbReference type="Rhea" id="RHEA-COMP:10375"/>
        <dbReference type="Rhea" id="RHEA-COMP:10376"/>
        <dbReference type="Rhea" id="RHEA-COMP:14737"/>
        <dbReference type="Rhea" id="RHEA-COMP:14739"/>
        <dbReference type="ChEBI" id="CHEBI:13193"/>
        <dbReference type="ChEBI" id="CHEBI:15378"/>
        <dbReference type="ChEBI" id="CHEBI:17319"/>
        <dbReference type="ChEBI" id="CHEBI:17499"/>
        <dbReference type="ChEBI" id="CHEBI:29917"/>
        <dbReference type="ChEBI" id="CHEBI:57844"/>
        <dbReference type="ChEBI" id="CHEBI:57856"/>
        <dbReference type="ChEBI" id="CHEBI:59789"/>
        <dbReference type="ChEBI" id="CHEBI:64428"/>
        <dbReference type="ChEBI" id="CHEBI:74415"/>
        <dbReference type="ChEBI" id="CHEBI:74417"/>
        <dbReference type="EC" id="2.8.4.3"/>
    </reaction>
</comment>
<comment type="cofactor">
    <cofactor evidence="1">
        <name>[4Fe-4S] cluster</name>
        <dbReference type="ChEBI" id="CHEBI:49883"/>
    </cofactor>
    <text evidence="1">Binds 2 [4Fe-4S] clusters. One cluster is coordinated with 3 cysteines and an exchangeable S-adenosyl-L-methionine.</text>
</comment>
<comment type="subunit">
    <text evidence="1">Monomer.</text>
</comment>
<comment type="subcellular location">
    <subcellularLocation>
        <location evidence="1">Cytoplasm</location>
    </subcellularLocation>
</comment>
<comment type="similarity">
    <text evidence="1">Belongs to the methylthiotransferase family. MiaB subfamily.</text>
</comment>
<comment type="sequence caution" evidence="4">
    <conflict type="erroneous initiation">
        <sequence resource="EMBL-CDS" id="AAM37312"/>
    </conflict>
</comment>
<protein>
    <recommendedName>
        <fullName evidence="1">tRNA-2-methylthio-N(6)-dimethylallyladenosine synthase</fullName>
        <ecNumber evidence="1">2.8.4.3</ecNumber>
    </recommendedName>
    <alternativeName>
        <fullName evidence="1">(Dimethylallyl)adenosine tRNA methylthiotransferase MiaB</fullName>
    </alternativeName>
    <alternativeName>
        <fullName evidence="1">tRNA-i(6)A37 methylthiotransferase</fullName>
    </alternativeName>
</protein>
<organism>
    <name type="scientific">Xanthomonas axonopodis pv. citri (strain 306)</name>
    <dbReference type="NCBI Taxonomy" id="190486"/>
    <lineage>
        <taxon>Bacteria</taxon>
        <taxon>Pseudomonadati</taxon>
        <taxon>Pseudomonadota</taxon>
        <taxon>Gammaproteobacteria</taxon>
        <taxon>Lysobacterales</taxon>
        <taxon>Lysobacteraceae</taxon>
        <taxon>Xanthomonas</taxon>
    </lineage>
</organism>
<dbReference type="EC" id="2.8.4.3" evidence="1"/>
<dbReference type="EMBL" id="AE008923">
    <property type="protein sequence ID" value="AAM37312.1"/>
    <property type="status" value="ALT_INIT"/>
    <property type="molecule type" value="Genomic_DNA"/>
</dbReference>
<dbReference type="RefSeq" id="WP_011051603.1">
    <property type="nucleotide sequence ID" value="NC_003919.1"/>
</dbReference>
<dbReference type="SMR" id="Q8PJR9"/>
<dbReference type="GeneID" id="66911569"/>
<dbReference type="KEGG" id="xac:XAC2461"/>
<dbReference type="eggNOG" id="COG0621">
    <property type="taxonomic scope" value="Bacteria"/>
</dbReference>
<dbReference type="HOGENOM" id="CLU_018697_2_0_6"/>
<dbReference type="Proteomes" id="UP000000576">
    <property type="component" value="Chromosome"/>
</dbReference>
<dbReference type="GO" id="GO:0005829">
    <property type="term" value="C:cytosol"/>
    <property type="evidence" value="ECO:0007669"/>
    <property type="project" value="TreeGrafter"/>
</dbReference>
<dbReference type="GO" id="GO:0051539">
    <property type="term" value="F:4 iron, 4 sulfur cluster binding"/>
    <property type="evidence" value="ECO:0007669"/>
    <property type="project" value="UniProtKB-UniRule"/>
</dbReference>
<dbReference type="GO" id="GO:0046872">
    <property type="term" value="F:metal ion binding"/>
    <property type="evidence" value="ECO:0007669"/>
    <property type="project" value="UniProtKB-KW"/>
</dbReference>
<dbReference type="GO" id="GO:0035597">
    <property type="term" value="F:N6-isopentenyladenosine methylthiotransferase activity"/>
    <property type="evidence" value="ECO:0007669"/>
    <property type="project" value="TreeGrafter"/>
</dbReference>
<dbReference type="CDD" id="cd01335">
    <property type="entry name" value="Radical_SAM"/>
    <property type="match status" value="1"/>
</dbReference>
<dbReference type="FunFam" id="3.40.50.12160:FF:000001">
    <property type="entry name" value="tRNA-2-methylthio-N(6)-dimethylallyladenosine synthase"/>
    <property type="match status" value="1"/>
</dbReference>
<dbReference type="FunFam" id="3.80.30.20:FF:000001">
    <property type="entry name" value="tRNA-2-methylthio-N(6)-dimethylallyladenosine synthase 2"/>
    <property type="match status" value="1"/>
</dbReference>
<dbReference type="Gene3D" id="3.40.50.12160">
    <property type="entry name" value="Methylthiotransferase, N-terminal domain"/>
    <property type="match status" value="1"/>
</dbReference>
<dbReference type="Gene3D" id="3.80.30.20">
    <property type="entry name" value="tm_1862 like domain"/>
    <property type="match status" value="1"/>
</dbReference>
<dbReference type="HAMAP" id="MF_01864">
    <property type="entry name" value="tRNA_metthiotr_MiaB"/>
    <property type="match status" value="1"/>
</dbReference>
<dbReference type="InterPro" id="IPR006638">
    <property type="entry name" value="Elp3/MiaA/NifB-like_rSAM"/>
</dbReference>
<dbReference type="InterPro" id="IPR005839">
    <property type="entry name" value="Methylthiotransferase"/>
</dbReference>
<dbReference type="InterPro" id="IPR020612">
    <property type="entry name" value="Methylthiotransferase_CS"/>
</dbReference>
<dbReference type="InterPro" id="IPR013848">
    <property type="entry name" value="Methylthiotransferase_N"/>
</dbReference>
<dbReference type="InterPro" id="IPR038135">
    <property type="entry name" value="Methylthiotransferase_N_sf"/>
</dbReference>
<dbReference type="InterPro" id="IPR006463">
    <property type="entry name" value="MiaB_methiolase"/>
</dbReference>
<dbReference type="InterPro" id="IPR007197">
    <property type="entry name" value="rSAM"/>
</dbReference>
<dbReference type="InterPro" id="IPR023404">
    <property type="entry name" value="rSAM_horseshoe"/>
</dbReference>
<dbReference type="InterPro" id="IPR002792">
    <property type="entry name" value="TRAM_dom"/>
</dbReference>
<dbReference type="NCBIfam" id="TIGR01574">
    <property type="entry name" value="miaB-methiolase"/>
    <property type="match status" value="1"/>
</dbReference>
<dbReference type="NCBIfam" id="TIGR00089">
    <property type="entry name" value="MiaB/RimO family radical SAM methylthiotransferase"/>
    <property type="match status" value="1"/>
</dbReference>
<dbReference type="PANTHER" id="PTHR43020">
    <property type="entry name" value="CDK5 REGULATORY SUBUNIT-ASSOCIATED PROTEIN 1"/>
    <property type="match status" value="1"/>
</dbReference>
<dbReference type="PANTHER" id="PTHR43020:SF2">
    <property type="entry name" value="MITOCHONDRIAL TRNA METHYLTHIOTRANSFERASE CDK5RAP1"/>
    <property type="match status" value="1"/>
</dbReference>
<dbReference type="Pfam" id="PF04055">
    <property type="entry name" value="Radical_SAM"/>
    <property type="match status" value="1"/>
</dbReference>
<dbReference type="Pfam" id="PF01938">
    <property type="entry name" value="TRAM"/>
    <property type="match status" value="1"/>
</dbReference>
<dbReference type="Pfam" id="PF00919">
    <property type="entry name" value="UPF0004"/>
    <property type="match status" value="1"/>
</dbReference>
<dbReference type="SFLD" id="SFLDF00273">
    <property type="entry name" value="(dimethylallyl)adenosine_tRNA"/>
    <property type="match status" value="1"/>
</dbReference>
<dbReference type="SFLD" id="SFLDG01082">
    <property type="entry name" value="B12-binding_domain_containing"/>
    <property type="match status" value="1"/>
</dbReference>
<dbReference type="SFLD" id="SFLDS00029">
    <property type="entry name" value="Radical_SAM"/>
    <property type="match status" value="1"/>
</dbReference>
<dbReference type="SMART" id="SM00729">
    <property type="entry name" value="Elp3"/>
    <property type="match status" value="1"/>
</dbReference>
<dbReference type="SUPFAM" id="SSF102114">
    <property type="entry name" value="Radical SAM enzymes"/>
    <property type="match status" value="1"/>
</dbReference>
<dbReference type="PROSITE" id="PS51449">
    <property type="entry name" value="MTTASE_N"/>
    <property type="match status" value="1"/>
</dbReference>
<dbReference type="PROSITE" id="PS01278">
    <property type="entry name" value="MTTASE_RADICAL"/>
    <property type="match status" value="1"/>
</dbReference>
<dbReference type="PROSITE" id="PS51918">
    <property type="entry name" value="RADICAL_SAM"/>
    <property type="match status" value="1"/>
</dbReference>
<dbReference type="PROSITE" id="PS50926">
    <property type="entry name" value="TRAM"/>
    <property type="match status" value="1"/>
</dbReference>
<keyword id="KW-0004">4Fe-4S</keyword>
<keyword id="KW-0963">Cytoplasm</keyword>
<keyword id="KW-0408">Iron</keyword>
<keyword id="KW-0411">Iron-sulfur</keyword>
<keyword id="KW-0479">Metal-binding</keyword>
<keyword id="KW-0949">S-adenosyl-L-methionine</keyword>
<keyword id="KW-0808">Transferase</keyword>
<keyword id="KW-0819">tRNA processing</keyword>
<feature type="chain" id="PRO_0000374642" description="tRNA-2-methylthio-N(6)-dimethylallyladenosine synthase">
    <location>
        <begin position="1"/>
        <end position="484"/>
    </location>
</feature>
<feature type="domain" description="MTTase N-terminal" evidence="1">
    <location>
        <begin position="36"/>
        <end position="153"/>
    </location>
</feature>
<feature type="domain" description="Radical SAM core" evidence="2">
    <location>
        <begin position="176"/>
        <end position="415"/>
    </location>
</feature>
<feature type="domain" description="TRAM" evidence="1">
    <location>
        <begin position="416"/>
        <end position="479"/>
    </location>
</feature>
<feature type="region of interest" description="Disordered" evidence="3">
    <location>
        <begin position="428"/>
        <end position="450"/>
    </location>
</feature>
<feature type="binding site" evidence="1">
    <location>
        <position position="45"/>
    </location>
    <ligand>
        <name>[4Fe-4S] cluster</name>
        <dbReference type="ChEBI" id="CHEBI:49883"/>
        <label>1</label>
    </ligand>
</feature>
<feature type="binding site" evidence="1">
    <location>
        <position position="82"/>
    </location>
    <ligand>
        <name>[4Fe-4S] cluster</name>
        <dbReference type="ChEBI" id="CHEBI:49883"/>
        <label>1</label>
    </ligand>
</feature>
<feature type="binding site" evidence="1">
    <location>
        <position position="116"/>
    </location>
    <ligand>
        <name>[4Fe-4S] cluster</name>
        <dbReference type="ChEBI" id="CHEBI:49883"/>
        <label>1</label>
    </ligand>
</feature>
<feature type="binding site" evidence="1">
    <location>
        <position position="190"/>
    </location>
    <ligand>
        <name>[4Fe-4S] cluster</name>
        <dbReference type="ChEBI" id="CHEBI:49883"/>
        <label>2</label>
        <note>4Fe-4S-S-AdoMet</note>
    </ligand>
</feature>
<feature type="binding site" evidence="1">
    <location>
        <position position="194"/>
    </location>
    <ligand>
        <name>[4Fe-4S] cluster</name>
        <dbReference type="ChEBI" id="CHEBI:49883"/>
        <label>2</label>
        <note>4Fe-4S-S-AdoMet</note>
    </ligand>
</feature>
<feature type="binding site" evidence="1">
    <location>
        <position position="197"/>
    </location>
    <ligand>
        <name>[4Fe-4S] cluster</name>
        <dbReference type="ChEBI" id="CHEBI:49883"/>
        <label>2</label>
        <note>4Fe-4S-S-AdoMet</note>
    </ligand>
</feature>
<name>MIAB_XANAC</name>
<accession>Q8PJR9</accession>
<reference key="1">
    <citation type="journal article" date="2002" name="Nature">
        <title>Comparison of the genomes of two Xanthomonas pathogens with differing host specificities.</title>
        <authorList>
            <person name="da Silva A.C.R."/>
            <person name="Ferro J.A."/>
            <person name="Reinach F.C."/>
            <person name="Farah C.S."/>
            <person name="Furlan L.R."/>
            <person name="Quaggio R.B."/>
            <person name="Monteiro-Vitorello C.B."/>
            <person name="Van Sluys M.A."/>
            <person name="Almeida N.F. Jr."/>
            <person name="Alves L.M.C."/>
            <person name="do Amaral A.M."/>
            <person name="Bertolini M.C."/>
            <person name="Camargo L.E.A."/>
            <person name="Camarotte G."/>
            <person name="Cannavan F."/>
            <person name="Cardozo J."/>
            <person name="Chambergo F."/>
            <person name="Ciapina L.P."/>
            <person name="Cicarelli R.M.B."/>
            <person name="Coutinho L.L."/>
            <person name="Cursino-Santos J.R."/>
            <person name="El-Dorry H."/>
            <person name="Faria J.B."/>
            <person name="Ferreira A.J.S."/>
            <person name="Ferreira R.C.C."/>
            <person name="Ferro M.I.T."/>
            <person name="Formighieri E.F."/>
            <person name="Franco M.C."/>
            <person name="Greggio C.C."/>
            <person name="Gruber A."/>
            <person name="Katsuyama A.M."/>
            <person name="Kishi L.T."/>
            <person name="Leite R.P."/>
            <person name="Lemos E.G.M."/>
            <person name="Lemos M.V.F."/>
            <person name="Locali E.C."/>
            <person name="Machado M.A."/>
            <person name="Madeira A.M.B.N."/>
            <person name="Martinez-Rossi N.M."/>
            <person name="Martins E.C."/>
            <person name="Meidanis J."/>
            <person name="Menck C.F.M."/>
            <person name="Miyaki C.Y."/>
            <person name="Moon D.H."/>
            <person name="Moreira L.M."/>
            <person name="Novo M.T.M."/>
            <person name="Okura V.K."/>
            <person name="Oliveira M.C."/>
            <person name="Oliveira V.R."/>
            <person name="Pereira H.A."/>
            <person name="Rossi A."/>
            <person name="Sena J.A.D."/>
            <person name="Silva C."/>
            <person name="de Souza R.F."/>
            <person name="Spinola L.A.F."/>
            <person name="Takita M.A."/>
            <person name="Tamura R.E."/>
            <person name="Teixeira E.C."/>
            <person name="Tezza R.I.D."/>
            <person name="Trindade dos Santos M."/>
            <person name="Truffi D."/>
            <person name="Tsai S.M."/>
            <person name="White F.F."/>
            <person name="Setubal J.C."/>
            <person name="Kitajima J.P."/>
        </authorList>
    </citation>
    <scope>NUCLEOTIDE SEQUENCE [LARGE SCALE GENOMIC DNA]</scope>
    <source>
        <strain>306</strain>
    </source>
</reference>
<sequence>MPGTPVSDLSAATAVDATALLPLPVARPSAPAMVRGKLYIKTHGCQMNEYDSAKMADVLAASEGLELTDDPEEADVVLVNTCSIREKAQEKVFSQLGRWKALKAGGKPVIIGVGGCVASQEGEAIVKRAPYVDLVFGPQTLHRLPELIRARRESGKSQVDISFPEIEKFDRLPEPRAEGPSAFVSIMEGCSKYCSFCVVPYTRGEEVSRPFEDVLVEVAQLAAQGVREINLLGQNVNAYRGAYGADAGDAAQYADLGLLIRTIAQIEGIGRIRFTTSHPLEFSDSLVDAYRDVPQLANYLHLPVQAGSDRILSAMKRGYTALEFKSKIRKLRAVRPDISISSDFIVGFPGETEADFEKTMKLIEDVGFDQSFSFVYSRRPGTPASDLQDDTPEAVKQARLARLQAHINAHAASISQSMVGSVQRVLVEGPSRRDPNELTGKSENMRPVNFPGNPRLIGQFVDVLITEAMSNSLRGRIQLDDSAH</sequence>
<proteinExistence type="inferred from homology"/>
<evidence type="ECO:0000255" key="1">
    <source>
        <dbReference type="HAMAP-Rule" id="MF_01864"/>
    </source>
</evidence>
<evidence type="ECO:0000255" key="2">
    <source>
        <dbReference type="PROSITE-ProRule" id="PRU01266"/>
    </source>
</evidence>
<evidence type="ECO:0000256" key="3">
    <source>
        <dbReference type="SAM" id="MobiDB-lite"/>
    </source>
</evidence>
<evidence type="ECO:0000305" key="4"/>